<reference key="1">
    <citation type="journal article" date="2005" name="Nature">
        <title>The genome of the social amoeba Dictyostelium discoideum.</title>
        <authorList>
            <person name="Eichinger L."/>
            <person name="Pachebat J.A."/>
            <person name="Gloeckner G."/>
            <person name="Rajandream M.A."/>
            <person name="Sucgang R."/>
            <person name="Berriman M."/>
            <person name="Song J."/>
            <person name="Olsen R."/>
            <person name="Szafranski K."/>
            <person name="Xu Q."/>
            <person name="Tunggal B."/>
            <person name="Kummerfeld S."/>
            <person name="Madera M."/>
            <person name="Konfortov B.A."/>
            <person name="Rivero F."/>
            <person name="Bankier A.T."/>
            <person name="Lehmann R."/>
            <person name="Hamlin N."/>
            <person name="Davies R."/>
            <person name="Gaudet P."/>
            <person name="Fey P."/>
            <person name="Pilcher K."/>
            <person name="Chen G."/>
            <person name="Saunders D."/>
            <person name="Sodergren E.J."/>
            <person name="Davis P."/>
            <person name="Kerhornou A."/>
            <person name="Nie X."/>
            <person name="Hall N."/>
            <person name="Anjard C."/>
            <person name="Hemphill L."/>
            <person name="Bason N."/>
            <person name="Farbrother P."/>
            <person name="Desany B."/>
            <person name="Just E."/>
            <person name="Morio T."/>
            <person name="Rost R."/>
            <person name="Churcher C.M."/>
            <person name="Cooper J."/>
            <person name="Haydock S."/>
            <person name="van Driessche N."/>
            <person name="Cronin A."/>
            <person name="Goodhead I."/>
            <person name="Muzny D.M."/>
            <person name="Mourier T."/>
            <person name="Pain A."/>
            <person name="Lu M."/>
            <person name="Harper D."/>
            <person name="Lindsay R."/>
            <person name="Hauser H."/>
            <person name="James K.D."/>
            <person name="Quiles M."/>
            <person name="Madan Babu M."/>
            <person name="Saito T."/>
            <person name="Buchrieser C."/>
            <person name="Wardroper A."/>
            <person name="Felder M."/>
            <person name="Thangavelu M."/>
            <person name="Johnson D."/>
            <person name="Knights A."/>
            <person name="Loulseged H."/>
            <person name="Mungall K.L."/>
            <person name="Oliver K."/>
            <person name="Price C."/>
            <person name="Quail M.A."/>
            <person name="Urushihara H."/>
            <person name="Hernandez J."/>
            <person name="Rabbinowitsch E."/>
            <person name="Steffen D."/>
            <person name="Sanders M."/>
            <person name="Ma J."/>
            <person name="Kohara Y."/>
            <person name="Sharp S."/>
            <person name="Simmonds M.N."/>
            <person name="Spiegler S."/>
            <person name="Tivey A."/>
            <person name="Sugano S."/>
            <person name="White B."/>
            <person name="Walker D."/>
            <person name="Woodward J.R."/>
            <person name="Winckler T."/>
            <person name="Tanaka Y."/>
            <person name="Shaulsky G."/>
            <person name="Schleicher M."/>
            <person name="Weinstock G.M."/>
            <person name="Rosenthal A."/>
            <person name="Cox E.C."/>
            <person name="Chisholm R.L."/>
            <person name="Gibbs R.A."/>
            <person name="Loomis W.F."/>
            <person name="Platzer M."/>
            <person name="Kay R.R."/>
            <person name="Williams J.G."/>
            <person name="Dear P.H."/>
            <person name="Noegel A.A."/>
            <person name="Barrell B.G."/>
            <person name="Kuspa A."/>
        </authorList>
    </citation>
    <scope>NUCLEOTIDE SEQUENCE [LARGE SCALE GENOMIC DNA]</scope>
    <source>
        <strain>AX4</strain>
    </source>
</reference>
<reference key="2">
    <citation type="journal article" date="2007" name="Biochimie">
        <title>Mitochondrial carrier family: repertoire and peculiarities of the cellular slime mould Dictyostelium discoideum.</title>
        <authorList>
            <person name="Satre M."/>
            <person name="Mattei S."/>
            <person name="Aubry L."/>
            <person name="Gaudet P."/>
            <person name="Pelosi L."/>
            <person name="Brandolin G."/>
            <person name="Klein G."/>
        </authorList>
    </citation>
    <scope>REVIEW</scope>
</reference>
<feature type="chain" id="PRO_0000385517" description="Mitochondrial substrate carrier family protein A">
    <location>
        <begin position="1"/>
        <end position="327"/>
    </location>
</feature>
<feature type="topological domain" description="Mitochondrial intermembrane" evidence="1">
    <location>
        <begin position="1"/>
        <end position="48"/>
    </location>
</feature>
<feature type="transmembrane region" description="Helical; Name=1" evidence="2">
    <location>
        <begin position="49"/>
        <end position="66"/>
    </location>
</feature>
<feature type="topological domain" description="Mitochondrial matrix" evidence="1">
    <location>
        <begin position="67"/>
        <end position="106"/>
    </location>
</feature>
<feature type="transmembrane region" description="Helical; Name=2" evidence="2">
    <location>
        <begin position="107"/>
        <end position="127"/>
    </location>
</feature>
<feature type="topological domain" description="Mitochondrial intermembrane" evidence="1">
    <location>
        <begin position="128"/>
        <end position="145"/>
    </location>
</feature>
<feature type="transmembrane region" description="Helical; Name=3" evidence="2">
    <location>
        <begin position="146"/>
        <end position="166"/>
    </location>
</feature>
<feature type="topological domain" description="Mitochondrial matrix" evidence="1">
    <location>
        <begin position="167"/>
        <end position="192"/>
    </location>
</feature>
<feature type="transmembrane region" description="Helical; Name=4" evidence="2">
    <location>
        <begin position="193"/>
        <end position="213"/>
    </location>
</feature>
<feature type="topological domain" description="Mitochondrial intermembrane" evidence="1">
    <location>
        <begin position="214"/>
        <end position="238"/>
    </location>
</feature>
<feature type="transmembrane region" description="Helical; Name=5" evidence="2">
    <location>
        <begin position="239"/>
        <end position="259"/>
    </location>
</feature>
<feature type="topological domain" description="Mitochondrial matrix" evidence="1">
    <location>
        <begin position="260"/>
        <end position="303"/>
    </location>
</feature>
<feature type="transmembrane region" description="Helical; Name=6" evidence="2">
    <location>
        <begin position="304"/>
        <end position="324"/>
    </location>
</feature>
<feature type="topological domain" description="Mitochondrial intermembrane" evidence="1">
    <location>
        <begin position="325"/>
        <end position="327"/>
    </location>
</feature>
<feature type="repeat" description="Solcar 1">
    <location>
        <begin position="43"/>
        <end position="132"/>
    </location>
</feature>
<feature type="repeat" description="Solcar 2">
    <location>
        <begin position="140"/>
        <end position="224"/>
    </location>
</feature>
<feature type="repeat" description="Solcar 3">
    <location>
        <begin position="233"/>
        <end position="323"/>
    </location>
</feature>
<feature type="region of interest" description="Disordered" evidence="3">
    <location>
        <begin position="1"/>
        <end position="36"/>
    </location>
</feature>
<name>MCFA_DICDI</name>
<proteinExistence type="inferred from homology"/>
<sequence>MVINNQNNNNQNNNQNNNNKNDNLNNSTTTTTTTATTTKSSTLFHSNDFFSGLIAGIVSRTLTAPLERIKILNQVEVILKDGTKYNRIIPAFKVIIKEEGIAGLFRGNFVNIIKAGPQSAIRFYSYGAFKRMASEPDGSISVINRMWAGASSGVVSVALTHPLDVIKTHITVIAPTAATIKNVTKGIYRDLGIIGFFRGLSAGILNIAPFAALNFTFYETIKEKTQQYILKSPPLYAPSIYGAISGGLTMTILYPLDVVKRRIMLQHFDRNQLPIYKNFIDAIIKITKTEGISALYKGIRPAYLKVIPTVSINFLIYEGAITLFEKK</sequence>
<comment type="function">
    <text evidence="1">Calcium-dependent mitochondrial solute carrier. Mitochondrial solute carriers shuttle metabolites, nucleotides, and cofactors through the mitochondrial inner membrane (By similarity).</text>
</comment>
<comment type="subcellular location">
    <subcellularLocation>
        <location evidence="1">Mitochondrion inner membrane</location>
        <topology evidence="1">Multi-pass membrane protein</topology>
    </subcellularLocation>
</comment>
<comment type="similarity">
    <text evidence="4">Belongs to the mitochondrial carrier (TC 2.A.29) family.</text>
</comment>
<dbReference type="EMBL" id="AAFI02000177">
    <property type="protein sequence ID" value="EAL61640.1"/>
    <property type="molecule type" value="Genomic_DNA"/>
</dbReference>
<dbReference type="RefSeq" id="XP_635136.1">
    <property type="nucleotide sequence ID" value="XM_630044.1"/>
</dbReference>
<dbReference type="SMR" id="Q54EV4"/>
<dbReference type="STRING" id="44689.Q54EV4"/>
<dbReference type="GlyGen" id="Q54EV4">
    <property type="glycosylation" value="1 site"/>
</dbReference>
<dbReference type="PaxDb" id="44689-DDB0237600"/>
<dbReference type="EnsemblProtists" id="EAL61640">
    <property type="protein sequence ID" value="EAL61640"/>
    <property type="gene ID" value="DDB_G0291312"/>
</dbReference>
<dbReference type="GeneID" id="8628082"/>
<dbReference type="KEGG" id="ddi:DDB_G0291312"/>
<dbReference type="dictyBase" id="DDB_G0291312">
    <property type="gene designation" value="mcfA"/>
</dbReference>
<dbReference type="VEuPathDB" id="AmoebaDB:DDB_G0291312"/>
<dbReference type="eggNOG" id="KOG0752">
    <property type="taxonomic scope" value="Eukaryota"/>
</dbReference>
<dbReference type="HOGENOM" id="CLU_015166_10_3_1"/>
<dbReference type="InParanoid" id="Q54EV4"/>
<dbReference type="OMA" id="ESPPFQE"/>
<dbReference type="PhylomeDB" id="Q54EV4"/>
<dbReference type="PRO" id="PR:Q54EV4"/>
<dbReference type="Proteomes" id="UP000002195">
    <property type="component" value="Chromosome 6"/>
</dbReference>
<dbReference type="GO" id="GO:0005743">
    <property type="term" value="C:mitochondrial inner membrane"/>
    <property type="evidence" value="ECO:0007669"/>
    <property type="project" value="UniProtKB-SubCell"/>
</dbReference>
<dbReference type="GO" id="GO:0015215">
    <property type="term" value="F:nucleotide transmembrane transporter activity"/>
    <property type="evidence" value="ECO:0000318"/>
    <property type="project" value="GO_Central"/>
</dbReference>
<dbReference type="GO" id="GO:0051503">
    <property type="term" value="P:adenine nucleotide transport"/>
    <property type="evidence" value="ECO:0000318"/>
    <property type="project" value="GO_Central"/>
</dbReference>
<dbReference type="Gene3D" id="1.50.40.10">
    <property type="entry name" value="Mitochondrial carrier domain"/>
    <property type="match status" value="1"/>
</dbReference>
<dbReference type="InterPro" id="IPR002067">
    <property type="entry name" value="Mit_carrier"/>
</dbReference>
<dbReference type="InterPro" id="IPR018108">
    <property type="entry name" value="Mitochondrial_sb/sol_carrier"/>
</dbReference>
<dbReference type="InterPro" id="IPR023395">
    <property type="entry name" value="Mt_carrier_dom_sf"/>
</dbReference>
<dbReference type="PANTHER" id="PTHR24089">
    <property type="entry name" value="SOLUTE CARRIER FAMILY 25"/>
    <property type="match status" value="1"/>
</dbReference>
<dbReference type="Pfam" id="PF00153">
    <property type="entry name" value="Mito_carr"/>
    <property type="match status" value="3"/>
</dbReference>
<dbReference type="PRINTS" id="PR00926">
    <property type="entry name" value="MITOCARRIER"/>
</dbReference>
<dbReference type="SUPFAM" id="SSF103506">
    <property type="entry name" value="Mitochondrial carrier"/>
    <property type="match status" value="1"/>
</dbReference>
<dbReference type="PROSITE" id="PS50920">
    <property type="entry name" value="SOLCAR"/>
    <property type="match status" value="3"/>
</dbReference>
<accession>Q54EV4</accession>
<keyword id="KW-0472">Membrane</keyword>
<keyword id="KW-0496">Mitochondrion</keyword>
<keyword id="KW-0999">Mitochondrion inner membrane</keyword>
<keyword id="KW-1185">Reference proteome</keyword>
<keyword id="KW-0677">Repeat</keyword>
<keyword id="KW-0812">Transmembrane</keyword>
<keyword id="KW-1133">Transmembrane helix</keyword>
<keyword id="KW-0813">Transport</keyword>
<evidence type="ECO:0000250" key="1"/>
<evidence type="ECO:0000255" key="2"/>
<evidence type="ECO:0000256" key="3">
    <source>
        <dbReference type="SAM" id="MobiDB-lite"/>
    </source>
</evidence>
<evidence type="ECO:0000305" key="4"/>
<organism>
    <name type="scientific">Dictyostelium discoideum</name>
    <name type="common">Social amoeba</name>
    <dbReference type="NCBI Taxonomy" id="44689"/>
    <lineage>
        <taxon>Eukaryota</taxon>
        <taxon>Amoebozoa</taxon>
        <taxon>Evosea</taxon>
        <taxon>Eumycetozoa</taxon>
        <taxon>Dictyostelia</taxon>
        <taxon>Dictyosteliales</taxon>
        <taxon>Dictyosteliaceae</taxon>
        <taxon>Dictyostelium</taxon>
    </lineage>
</organism>
<protein>
    <recommendedName>
        <fullName>Mitochondrial substrate carrier family protein A</fullName>
    </recommendedName>
</protein>
<gene>
    <name type="primary">mcfA</name>
    <name type="ORF">DDB_G0291312</name>
</gene>